<reference key="1">
    <citation type="journal article" date="2002" name="Proc. Natl. Acad. Sci. U.S.A.">
        <title>Complete genome sequence and comparative genomic analysis of an emerging human pathogen, serotype V Streptococcus agalactiae.</title>
        <authorList>
            <person name="Tettelin H."/>
            <person name="Masignani V."/>
            <person name="Cieslewicz M.J."/>
            <person name="Eisen J.A."/>
            <person name="Peterson S.N."/>
            <person name="Wessels M.R."/>
            <person name="Paulsen I.T."/>
            <person name="Nelson K.E."/>
            <person name="Margarit I."/>
            <person name="Read T.D."/>
            <person name="Madoff L.C."/>
            <person name="Wolf A.M."/>
            <person name="Beanan M.J."/>
            <person name="Brinkac L.M."/>
            <person name="Daugherty S.C."/>
            <person name="DeBoy R.T."/>
            <person name="Durkin A.S."/>
            <person name="Kolonay J.F."/>
            <person name="Madupu R."/>
            <person name="Lewis M.R."/>
            <person name="Radune D."/>
            <person name="Fedorova N.B."/>
            <person name="Scanlan D."/>
            <person name="Khouri H.M."/>
            <person name="Mulligan S."/>
            <person name="Carty H.A."/>
            <person name="Cline R.T."/>
            <person name="Van Aken S.E."/>
            <person name="Gill J."/>
            <person name="Scarselli M."/>
            <person name="Mora M."/>
            <person name="Iacobini E.T."/>
            <person name="Brettoni C."/>
            <person name="Galli G."/>
            <person name="Mariani M."/>
            <person name="Vegni F."/>
            <person name="Maione D."/>
            <person name="Rinaudo D."/>
            <person name="Rappuoli R."/>
            <person name="Telford J.L."/>
            <person name="Kasper D.L."/>
            <person name="Grandi G."/>
            <person name="Fraser C.M."/>
        </authorList>
    </citation>
    <scope>NUCLEOTIDE SEQUENCE [LARGE SCALE GENOMIC DNA]</scope>
    <source>
        <strain>ATCC BAA-611 / 2603 V/R</strain>
    </source>
</reference>
<dbReference type="EC" id="1.3.98.1"/>
<dbReference type="EMBL" id="AE009948">
    <property type="protein sequence ID" value="AAM99409.1"/>
    <property type="molecule type" value="Genomic_DNA"/>
</dbReference>
<dbReference type="RefSeq" id="NP_687537.1">
    <property type="nucleotide sequence ID" value="NC_004116.1"/>
</dbReference>
<dbReference type="RefSeq" id="WP_000254063.1">
    <property type="nucleotide sequence ID" value="NC_004116.1"/>
</dbReference>
<dbReference type="SMR" id="Q8E155"/>
<dbReference type="STRING" id="208435.SAG0507"/>
<dbReference type="KEGG" id="sag:SAG0507"/>
<dbReference type="PATRIC" id="fig|208435.3.peg.504"/>
<dbReference type="HOGENOM" id="CLU_042042_3_0_9"/>
<dbReference type="OrthoDB" id="9794954at2"/>
<dbReference type="UniPathway" id="UPA00070"/>
<dbReference type="Proteomes" id="UP000000821">
    <property type="component" value="Chromosome"/>
</dbReference>
<dbReference type="GO" id="GO:0005737">
    <property type="term" value="C:cytoplasm"/>
    <property type="evidence" value="ECO:0007669"/>
    <property type="project" value="UniProtKB-SubCell"/>
</dbReference>
<dbReference type="GO" id="GO:1990663">
    <property type="term" value="F:dihydroorotate dehydrogenase (fumarate) activity"/>
    <property type="evidence" value="ECO:0007669"/>
    <property type="project" value="UniProtKB-EC"/>
</dbReference>
<dbReference type="GO" id="GO:0006207">
    <property type="term" value="P:'de novo' pyrimidine nucleobase biosynthetic process"/>
    <property type="evidence" value="ECO:0007669"/>
    <property type="project" value="InterPro"/>
</dbReference>
<dbReference type="GO" id="GO:0044205">
    <property type="term" value="P:'de novo' UMP biosynthetic process"/>
    <property type="evidence" value="ECO:0007669"/>
    <property type="project" value="UniProtKB-UniRule"/>
</dbReference>
<dbReference type="CDD" id="cd04741">
    <property type="entry name" value="DHOD_1A_like"/>
    <property type="match status" value="1"/>
</dbReference>
<dbReference type="FunFam" id="3.20.20.70:FF:000027">
    <property type="entry name" value="Dihydropyrimidine dehydrogenase [NADP(+)]"/>
    <property type="match status" value="1"/>
</dbReference>
<dbReference type="Gene3D" id="3.20.20.70">
    <property type="entry name" value="Aldolase class I"/>
    <property type="match status" value="1"/>
</dbReference>
<dbReference type="HAMAP" id="MF_00224">
    <property type="entry name" value="DHO_dh_type1"/>
    <property type="match status" value="1"/>
</dbReference>
<dbReference type="InterPro" id="IPR013785">
    <property type="entry name" value="Aldolase_TIM"/>
</dbReference>
<dbReference type="InterPro" id="IPR050074">
    <property type="entry name" value="DHO_dehydrogenase"/>
</dbReference>
<dbReference type="InterPro" id="IPR033886">
    <property type="entry name" value="DHOD_1A"/>
</dbReference>
<dbReference type="InterPro" id="IPR024920">
    <property type="entry name" value="Dihydroorotate_DH_1"/>
</dbReference>
<dbReference type="InterPro" id="IPR012135">
    <property type="entry name" value="Dihydroorotate_DH_1_2"/>
</dbReference>
<dbReference type="InterPro" id="IPR005720">
    <property type="entry name" value="Dihydroorotate_DH_cat"/>
</dbReference>
<dbReference type="InterPro" id="IPR001295">
    <property type="entry name" value="Dihydroorotate_DH_CS"/>
</dbReference>
<dbReference type="NCBIfam" id="NF002702">
    <property type="entry name" value="PRK02506.1"/>
    <property type="match status" value="1"/>
</dbReference>
<dbReference type="PANTHER" id="PTHR48109:SF1">
    <property type="entry name" value="DIHYDROOROTATE DEHYDROGENASE (FUMARATE)"/>
    <property type="match status" value="1"/>
</dbReference>
<dbReference type="PANTHER" id="PTHR48109">
    <property type="entry name" value="DIHYDROOROTATE DEHYDROGENASE (QUINONE), MITOCHONDRIAL-RELATED"/>
    <property type="match status" value="1"/>
</dbReference>
<dbReference type="Pfam" id="PF01180">
    <property type="entry name" value="DHO_dh"/>
    <property type="match status" value="1"/>
</dbReference>
<dbReference type="PIRSF" id="PIRSF000164">
    <property type="entry name" value="DHO_oxidase"/>
    <property type="match status" value="1"/>
</dbReference>
<dbReference type="SUPFAM" id="SSF51395">
    <property type="entry name" value="FMN-linked oxidoreductases"/>
    <property type="match status" value="1"/>
</dbReference>
<dbReference type="PROSITE" id="PS00912">
    <property type="entry name" value="DHODEHASE_2"/>
    <property type="match status" value="1"/>
</dbReference>
<proteinExistence type="inferred from homology"/>
<gene>
    <name type="primary">pyrD</name>
    <name type="ordered locus">SAG0507</name>
</gene>
<keyword id="KW-0963">Cytoplasm</keyword>
<keyword id="KW-0285">Flavoprotein</keyword>
<keyword id="KW-0288">FMN</keyword>
<keyword id="KW-0560">Oxidoreductase</keyword>
<keyword id="KW-0665">Pyrimidine biosynthesis</keyword>
<keyword id="KW-1185">Reference proteome</keyword>
<protein>
    <recommendedName>
        <fullName>Putative dihydroorotate dehydrogenase A (fumarate)</fullName>
        <shortName>DHOD A</shortName>
        <shortName>DHODase A</shortName>
        <shortName>DHOdehase A</shortName>
        <ecNumber>1.3.98.1</ecNumber>
    </recommendedName>
</protein>
<accession>Q8E155</accession>
<evidence type="ECO:0000250" key="1"/>
<evidence type="ECO:0000305" key="2"/>
<comment type="function">
    <text evidence="1">Catalyzes the conversion of dihydroorotate to orotate with fumarate as the electron acceptor.</text>
</comment>
<comment type="catalytic activity">
    <reaction>
        <text>(S)-dihydroorotate + fumarate = orotate + succinate</text>
        <dbReference type="Rhea" id="RHEA:30059"/>
        <dbReference type="ChEBI" id="CHEBI:29806"/>
        <dbReference type="ChEBI" id="CHEBI:30031"/>
        <dbReference type="ChEBI" id="CHEBI:30839"/>
        <dbReference type="ChEBI" id="CHEBI:30864"/>
        <dbReference type="EC" id="1.3.98.1"/>
    </reaction>
</comment>
<comment type="cofactor">
    <cofactor evidence="1">
        <name>FMN</name>
        <dbReference type="ChEBI" id="CHEBI:58210"/>
    </cofactor>
    <text evidence="1">Binds 1 FMN per subunit.</text>
</comment>
<comment type="pathway">
    <text>Pyrimidine metabolism; UMP biosynthesis via de novo pathway.</text>
</comment>
<comment type="subunit">
    <text evidence="1">Homodimer.</text>
</comment>
<comment type="subcellular location">
    <subcellularLocation>
        <location evidence="1">Cytoplasm</location>
    </subcellularLocation>
</comment>
<comment type="similarity">
    <text evidence="2">Belongs to the dihydroorotate dehydrogenase family. Type 1 subfamily.</text>
</comment>
<organism>
    <name type="scientific">Streptococcus agalactiae serotype V (strain ATCC BAA-611 / 2603 V/R)</name>
    <dbReference type="NCBI Taxonomy" id="208435"/>
    <lineage>
        <taxon>Bacteria</taxon>
        <taxon>Bacillati</taxon>
        <taxon>Bacillota</taxon>
        <taxon>Bacilli</taxon>
        <taxon>Lactobacillales</taxon>
        <taxon>Streptococcaceae</taxon>
        <taxon>Streptococcus</taxon>
    </lineage>
</organism>
<feature type="chain" id="PRO_1000100229" description="Putative dihydroorotate dehydrogenase A (fumarate)">
    <location>
        <begin position="1"/>
        <end position="310"/>
    </location>
</feature>
<feature type="active site" description="Nucleophile">
    <location>
        <position position="131"/>
    </location>
</feature>
<feature type="binding site" evidence="1">
    <location>
        <begin position="45"/>
        <end position="46"/>
    </location>
    <ligand>
        <name>FMN</name>
        <dbReference type="ChEBI" id="CHEBI:58210"/>
    </ligand>
</feature>
<feature type="binding site" evidence="1">
    <location>
        <position position="45"/>
    </location>
    <ligand>
        <name>substrate</name>
    </ligand>
</feature>
<feature type="binding site" evidence="1">
    <location>
        <begin position="69"/>
        <end position="73"/>
    </location>
    <ligand>
        <name>substrate</name>
    </ligand>
</feature>
<feature type="binding site" evidence="1">
    <location>
        <position position="128"/>
    </location>
    <ligand>
        <name>FMN</name>
        <dbReference type="ChEBI" id="CHEBI:58210"/>
    </ligand>
</feature>
<feature type="binding site" evidence="1">
    <location>
        <position position="128"/>
    </location>
    <ligand>
        <name>substrate</name>
    </ligand>
</feature>
<feature type="binding site" evidence="1">
    <location>
        <position position="165"/>
    </location>
    <ligand>
        <name>FMN</name>
        <dbReference type="ChEBI" id="CHEBI:58210"/>
    </ligand>
</feature>
<feature type="binding site" evidence="1">
    <location>
        <position position="193"/>
    </location>
    <ligand>
        <name>FMN</name>
        <dbReference type="ChEBI" id="CHEBI:58210"/>
    </ligand>
</feature>
<feature type="binding site" evidence="1">
    <location>
        <begin position="194"/>
        <end position="195"/>
    </location>
    <ligand>
        <name>substrate</name>
    </ligand>
</feature>
<feature type="binding site" evidence="1">
    <location>
        <position position="220"/>
    </location>
    <ligand>
        <name>FMN</name>
        <dbReference type="ChEBI" id="CHEBI:58210"/>
    </ligand>
</feature>
<feature type="binding site" evidence="1">
    <location>
        <begin position="248"/>
        <end position="249"/>
    </location>
    <ligand>
        <name>FMN</name>
        <dbReference type="ChEBI" id="CHEBI:58210"/>
    </ligand>
</feature>
<feature type="binding site" evidence="1">
    <location>
        <begin position="270"/>
        <end position="271"/>
    </location>
    <ligand>
        <name>FMN</name>
        <dbReference type="ChEBI" id="CHEBI:58210"/>
    </ligand>
</feature>
<sequence length="310" mass="34257">MVSLKTEIAGFSFDNCLMNAAGIYCMTKEELLAIENSEAGSFVTKTGTLEAREGNPQPRYADTDWGSINSMGLPNKGIDYYLDFVTELQDQDNSKNHVLSLVGLSPEETHIILKKVENSSYNGLIELNLSCPNVPGKPQIAYDFEMTDLILSEIFSYYQKPLGIKLPPYFDIVHFDQAATIFNKYPLAFINCVNSIGNGLVIDDETVVIKPKNGFGGIGGDFIKPTALANVHAFYKRLNPSIKIIGTGGVKNGRDAFEHILCGASMVQIGTALQKEGPEIFQRVSRELKEIMADKGYQSLEDFRGQLNYL</sequence>
<name>PYRDA_STRA5</name>